<evidence type="ECO:0000269" key="1">
    <source>
    </source>
</evidence>
<evidence type="ECO:0000269" key="2">
    <source>
    </source>
</evidence>
<evidence type="ECO:0000269" key="3">
    <source>
    </source>
</evidence>
<evidence type="ECO:0000269" key="4">
    <source>
    </source>
</evidence>
<evidence type="ECO:0000269" key="5">
    <source>
    </source>
</evidence>
<evidence type="ECO:0000305" key="6"/>
<evidence type="ECO:0000305" key="7">
    <source>
    </source>
</evidence>
<evidence type="ECO:0007829" key="8">
    <source>
        <dbReference type="PDB" id="2M0R"/>
    </source>
</evidence>
<dbReference type="EMBL" id="AY007220">
    <property type="protein sequence ID" value="AAG01893.1"/>
    <property type="molecule type" value="mRNA"/>
</dbReference>
<dbReference type="EMBL" id="AF426828">
    <property type="protein sequence ID" value="AAM19206.1"/>
    <property type="molecule type" value="Genomic_DNA"/>
</dbReference>
<dbReference type="EMBL" id="BX470102">
    <property type="status" value="NOT_ANNOTATED_CDS"/>
    <property type="molecule type" value="Genomic_DNA"/>
</dbReference>
<dbReference type="EMBL" id="BC005019">
    <property type="protein sequence ID" value="AAH05019.1"/>
    <property type="molecule type" value="mRNA"/>
</dbReference>
<dbReference type="CCDS" id="CCDS1046.1"/>
<dbReference type="RefSeq" id="NP_065723.1">
    <property type="nucleotide sequence ID" value="NM_020672.3"/>
</dbReference>
<dbReference type="RefSeq" id="XP_005245419.1">
    <property type="nucleotide sequence ID" value="XM_005245362.2"/>
</dbReference>
<dbReference type="RefSeq" id="XP_016857364.1">
    <property type="nucleotide sequence ID" value="XM_017001875.1"/>
</dbReference>
<dbReference type="RefSeq" id="XP_054193787.1">
    <property type="nucleotide sequence ID" value="XM_054337812.1"/>
</dbReference>
<dbReference type="RefSeq" id="XP_054193788.1">
    <property type="nucleotide sequence ID" value="XM_054337813.1"/>
</dbReference>
<dbReference type="PDB" id="2M0R">
    <property type="method" value="NMR"/>
    <property type="chains" value="A/B=1-104"/>
</dbReference>
<dbReference type="PDBsum" id="2M0R"/>
<dbReference type="BMRB" id="Q9HCY8"/>
<dbReference type="SMR" id="Q9HCY8"/>
<dbReference type="BioGRID" id="121504">
    <property type="interactions" value="70"/>
</dbReference>
<dbReference type="FunCoup" id="Q9HCY8">
    <property type="interactions" value="304"/>
</dbReference>
<dbReference type="IntAct" id="Q9HCY8">
    <property type="interactions" value="32"/>
</dbReference>
<dbReference type="MINT" id="Q9HCY8"/>
<dbReference type="STRING" id="9606.ENSP00000357691"/>
<dbReference type="GlyGen" id="Q9HCY8">
    <property type="glycosylation" value="1 site, 1 O-linked glycan (1 site)"/>
</dbReference>
<dbReference type="iPTMnet" id="Q9HCY8"/>
<dbReference type="PhosphoSitePlus" id="Q9HCY8"/>
<dbReference type="SwissPalm" id="Q9HCY8"/>
<dbReference type="BioMuta" id="S100A14"/>
<dbReference type="DMDM" id="20178118"/>
<dbReference type="jPOST" id="Q9HCY8"/>
<dbReference type="MassIVE" id="Q9HCY8"/>
<dbReference type="PaxDb" id="9606-ENSP00000357691"/>
<dbReference type="PeptideAtlas" id="Q9HCY8"/>
<dbReference type="PRIDE" id="Q9HCY8"/>
<dbReference type="ProteomicsDB" id="81807"/>
<dbReference type="TopDownProteomics" id="Q9HCY8"/>
<dbReference type="Antibodypedia" id="34129">
    <property type="antibodies" value="169 antibodies from 24 providers"/>
</dbReference>
<dbReference type="DNASU" id="57402"/>
<dbReference type="Ensembl" id="ENST00000344616.4">
    <property type="protein sequence ID" value="ENSP00000340463.2"/>
    <property type="gene ID" value="ENSG00000189334.9"/>
</dbReference>
<dbReference type="Ensembl" id="ENST00000368701.5">
    <property type="protein sequence ID" value="ENSP00000357690.1"/>
    <property type="gene ID" value="ENSG00000189334.9"/>
</dbReference>
<dbReference type="Ensembl" id="ENST00000368702.5">
    <property type="protein sequence ID" value="ENSP00000357691.1"/>
    <property type="gene ID" value="ENSG00000189334.9"/>
</dbReference>
<dbReference type="Ensembl" id="ENST00000476873.5">
    <property type="protein sequence ID" value="ENSP00000420296.1"/>
    <property type="gene ID" value="ENSG00000189334.9"/>
</dbReference>
<dbReference type="GeneID" id="57402"/>
<dbReference type="KEGG" id="hsa:57402"/>
<dbReference type="MANE-Select" id="ENST00000344616.4">
    <property type="protein sequence ID" value="ENSP00000340463.2"/>
    <property type="RefSeq nucleotide sequence ID" value="NM_020672.3"/>
    <property type="RefSeq protein sequence ID" value="NP_065723.1"/>
</dbReference>
<dbReference type="UCSC" id="uc001fce.4">
    <property type="organism name" value="human"/>
</dbReference>
<dbReference type="AGR" id="HGNC:18901"/>
<dbReference type="CTD" id="57402"/>
<dbReference type="DisGeNET" id="57402"/>
<dbReference type="GeneCards" id="S100A14"/>
<dbReference type="HGNC" id="HGNC:18901">
    <property type="gene designation" value="S100A14"/>
</dbReference>
<dbReference type="HPA" id="ENSG00000189334">
    <property type="expression patterns" value="Group enriched (esophagus, vagina)"/>
</dbReference>
<dbReference type="MIM" id="607986">
    <property type="type" value="gene"/>
</dbReference>
<dbReference type="neXtProt" id="NX_Q9HCY8"/>
<dbReference type="OpenTargets" id="ENSG00000189334"/>
<dbReference type="PharmGKB" id="PA134905502"/>
<dbReference type="VEuPathDB" id="HostDB:ENSG00000189334"/>
<dbReference type="eggNOG" id="ENOG502SB9V">
    <property type="taxonomic scope" value="Eukaryota"/>
</dbReference>
<dbReference type="GeneTree" id="ENSGT00940000161706"/>
<dbReference type="HOGENOM" id="CLU_138624_3_0_1"/>
<dbReference type="InParanoid" id="Q9HCY8"/>
<dbReference type="OMA" id="NFHQYSA"/>
<dbReference type="OrthoDB" id="9402565at2759"/>
<dbReference type="PAN-GO" id="Q9HCY8">
    <property type="GO annotations" value="9 GO annotations based on evolutionary models"/>
</dbReference>
<dbReference type="PhylomeDB" id="Q9HCY8"/>
<dbReference type="TreeFam" id="TF332727"/>
<dbReference type="PathwayCommons" id="Q9HCY8"/>
<dbReference type="SignaLink" id="Q9HCY8"/>
<dbReference type="BioGRID-ORCS" id="57402">
    <property type="hits" value="16 hits in 1155 CRISPR screens"/>
</dbReference>
<dbReference type="ChiTaRS" id="S100A14">
    <property type="organism name" value="human"/>
</dbReference>
<dbReference type="EvolutionaryTrace" id="Q9HCY8"/>
<dbReference type="GenomeRNAi" id="57402"/>
<dbReference type="Pharos" id="Q9HCY8">
    <property type="development level" value="Tbio"/>
</dbReference>
<dbReference type="PRO" id="PR:Q9HCY8"/>
<dbReference type="Proteomes" id="UP000005640">
    <property type="component" value="Chromosome 1"/>
</dbReference>
<dbReference type="RNAct" id="Q9HCY8">
    <property type="molecule type" value="protein"/>
</dbReference>
<dbReference type="Bgee" id="ENSG00000189334">
    <property type="expression patterns" value="Expressed in lower esophagus mucosa and 138 other cell types or tissues"/>
</dbReference>
<dbReference type="GO" id="GO:0070062">
    <property type="term" value="C:extracellular exosome"/>
    <property type="evidence" value="ECO:0007005"/>
    <property type="project" value="UniProtKB"/>
</dbReference>
<dbReference type="GO" id="GO:0005615">
    <property type="term" value="C:extracellular space"/>
    <property type="evidence" value="ECO:0000318"/>
    <property type="project" value="GO_Central"/>
</dbReference>
<dbReference type="GO" id="GO:0048471">
    <property type="term" value="C:perinuclear region of cytoplasm"/>
    <property type="evidence" value="ECO:0000314"/>
    <property type="project" value="UniProtKB"/>
</dbReference>
<dbReference type="GO" id="GO:0005509">
    <property type="term" value="F:calcium ion binding"/>
    <property type="evidence" value="ECO:0000318"/>
    <property type="project" value="GO_Central"/>
</dbReference>
<dbReference type="GO" id="GO:0048306">
    <property type="term" value="F:calcium-dependent protein binding"/>
    <property type="evidence" value="ECO:0000318"/>
    <property type="project" value="GO_Central"/>
</dbReference>
<dbReference type="GO" id="GO:0042379">
    <property type="term" value="F:chemokine receptor binding"/>
    <property type="evidence" value="ECO:0000315"/>
    <property type="project" value="UniProtKB"/>
</dbReference>
<dbReference type="GO" id="GO:0006915">
    <property type="term" value="P:apoptotic process"/>
    <property type="evidence" value="ECO:0007669"/>
    <property type="project" value="UniProtKB-KW"/>
</dbReference>
<dbReference type="GO" id="GO:0055074">
    <property type="term" value="P:calcium ion homeostasis"/>
    <property type="evidence" value="ECO:0000303"/>
    <property type="project" value="UniProtKB"/>
</dbReference>
<dbReference type="GO" id="GO:0042742">
    <property type="term" value="P:defense response to bacterium"/>
    <property type="evidence" value="ECO:0000270"/>
    <property type="project" value="UniProtKB"/>
</dbReference>
<dbReference type="GO" id="GO:0071624">
    <property type="term" value="P:positive regulation of granulocyte chemotaxis"/>
    <property type="evidence" value="ECO:0000314"/>
    <property type="project" value="UniProtKB"/>
</dbReference>
<dbReference type="GO" id="GO:0090026">
    <property type="term" value="P:positive regulation of monocyte chemotaxis"/>
    <property type="evidence" value="ECO:0000314"/>
    <property type="project" value="UniProtKB"/>
</dbReference>
<dbReference type="GO" id="GO:0032496">
    <property type="term" value="P:response to lipopolysaccharide"/>
    <property type="evidence" value="ECO:0000270"/>
    <property type="project" value="UniProtKB"/>
</dbReference>
<dbReference type="GO" id="GO:0034142">
    <property type="term" value="P:toll-like receptor 4 signaling pathway"/>
    <property type="evidence" value="ECO:0000314"/>
    <property type="project" value="UniProtKB"/>
</dbReference>
<dbReference type="CDD" id="cd05022">
    <property type="entry name" value="S-100A13"/>
    <property type="match status" value="1"/>
</dbReference>
<dbReference type="FunFam" id="1.10.238.10:FF:000221">
    <property type="entry name" value="Protein S100-A14 isoform X1"/>
    <property type="match status" value="1"/>
</dbReference>
<dbReference type="Gene3D" id="1.10.238.10">
    <property type="entry name" value="EF-hand"/>
    <property type="match status" value="1"/>
</dbReference>
<dbReference type="InterPro" id="IPR011992">
    <property type="entry name" value="EF-hand-dom_pair"/>
</dbReference>
<dbReference type="InterPro" id="IPR013787">
    <property type="entry name" value="S100_Ca-bd_sub"/>
</dbReference>
<dbReference type="PANTHER" id="PTHR11639:SF4">
    <property type="entry name" value="PROTEIN S100-A14"/>
    <property type="match status" value="1"/>
</dbReference>
<dbReference type="PANTHER" id="PTHR11639">
    <property type="entry name" value="S100 CALCIUM-BINDING PROTEIN"/>
    <property type="match status" value="1"/>
</dbReference>
<dbReference type="Pfam" id="PF01023">
    <property type="entry name" value="S_100"/>
    <property type="match status" value="1"/>
</dbReference>
<dbReference type="SMART" id="SM01394">
    <property type="entry name" value="S_100"/>
    <property type="match status" value="1"/>
</dbReference>
<dbReference type="SUPFAM" id="SSF47473">
    <property type="entry name" value="EF-hand"/>
    <property type="match status" value="1"/>
</dbReference>
<name>S10AE_HUMAN</name>
<comment type="function">
    <text evidence="2 3 4">Modulates P53/TP53 protein levels, and thereby plays a role in the regulation of cell survival and apoptosis. Depending on the context, it can promote cell proliferation or apoptosis. Plays a role in the regulation of cell migration by modulating the levels of MMP2, a matrix protease that is under transcriptional control of P53/TP53. Does not bind calcium.</text>
</comment>
<comment type="subunit">
    <text evidence="2 5">Homodimer. Interacts with AGER.</text>
</comment>
<comment type="interaction">
    <interactant intactId="EBI-751842">
        <id>Q9HCY8</id>
    </interactant>
    <interactant intactId="EBI-1045155">
        <id>P43360</id>
        <label>MAGEA6</label>
    </interactant>
    <organismsDiffer>false</organismsDiffer>
    <experiments>3</experiments>
</comment>
<comment type="interaction">
    <interactant intactId="EBI-751842">
        <id>Q9HCY8</id>
    </interactant>
    <interactant intactId="EBI-721909">
        <id>Q99584</id>
        <label>S100A13</label>
    </interactant>
    <organismsDiffer>false</organismsDiffer>
    <experiments>5</experiments>
</comment>
<comment type="interaction">
    <interactant intactId="EBI-751842">
        <id>Q9HCY8</id>
    </interactant>
    <interactant intactId="EBI-751850">
        <id>Q96FQ6</id>
        <label>S100A16</label>
    </interactant>
    <organismsDiffer>false</organismsDiffer>
    <experiments>11</experiments>
</comment>
<comment type="subcellular location">
    <subcellularLocation>
        <location evidence="1">Cytoplasm</location>
    </subcellularLocation>
</comment>
<comment type="tissue specificity">
    <text evidence="1">Expressed at highest levels in colon and at moderate levels in thymus, kidney, liver, small intestine, and lung. Low expression in heart and no expression is seen in brain, skeletal muscle, spleen, placenta and peripheral blood leukocytes.</text>
</comment>
<comment type="similarity">
    <text evidence="6">Belongs to the S-100 family.</text>
</comment>
<comment type="caution">
    <text evidence="7">Part of the residues that are essential for calcium binding are not conserved, resulting in loss of calcium binding at physiological calcium concentrations.</text>
</comment>
<gene>
    <name type="primary">S100A14</name>
    <name type="synonym">S100A15</name>
</gene>
<sequence length="104" mass="11662">MGQCRSANAEDAQEFSDVERAIETLIKNFHQYSVEGGKETLTPSELRDLVTQQLPHLMPSNCGLEEKIANLGSCNDSKLEFRSFWELIGEAAKSVKLERPVRGH</sequence>
<protein>
    <recommendedName>
        <fullName>Protein S100-A14</fullName>
    </recommendedName>
    <alternativeName>
        <fullName>S100 calcium-binding protein A14</fullName>
        <shortName>S114</shortName>
    </alternativeName>
</protein>
<keyword id="KW-0002">3D-structure</keyword>
<keyword id="KW-0053">Apoptosis</keyword>
<keyword id="KW-0963">Cytoplasm</keyword>
<keyword id="KW-1267">Proteomics identification</keyword>
<keyword id="KW-1185">Reference proteome</keyword>
<organism>
    <name type="scientific">Homo sapiens</name>
    <name type="common">Human</name>
    <dbReference type="NCBI Taxonomy" id="9606"/>
    <lineage>
        <taxon>Eukaryota</taxon>
        <taxon>Metazoa</taxon>
        <taxon>Chordata</taxon>
        <taxon>Craniata</taxon>
        <taxon>Vertebrata</taxon>
        <taxon>Euteleostomi</taxon>
        <taxon>Mammalia</taxon>
        <taxon>Eutheria</taxon>
        <taxon>Euarchontoglires</taxon>
        <taxon>Primates</taxon>
        <taxon>Haplorrhini</taxon>
        <taxon>Catarrhini</taxon>
        <taxon>Hominidae</taxon>
        <taxon>Homo</taxon>
    </lineage>
</organism>
<proteinExistence type="evidence at protein level"/>
<reference key="1">
    <citation type="journal article" date="2002" name="Genomics">
        <title>Molecular cloning and characterization of the human S100A14 gene encoding a novel member of the S100 family.</title>
        <authorList>
            <person name="Pietas A."/>
            <person name="Schluns K."/>
            <person name="Marenholz I."/>
            <person name="Schafer B.W."/>
            <person name="Heizmann C.W."/>
            <person name="Petersen I."/>
        </authorList>
    </citation>
    <scope>NUCLEOTIDE SEQUENCE [GENOMIC DNA / MRNA]</scope>
    <scope>SUBCELLULAR LOCATION</scope>
    <scope>TISSUE SPECIFICITY</scope>
</reference>
<reference key="2">
    <citation type="journal article" date="2006" name="Nature">
        <title>The DNA sequence and biological annotation of human chromosome 1.</title>
        <authorList>
            <person name="Gregory S.G."/>
            <person name="Barlow K.F."/>
            <person name="McLay K.E."/>
            <person name="Kaul R."/>
            <person name="Swarbreck D."/>
            <person name="Dunham A."/>
            <person name="Scott C.E."/>
            <person name="Howe K.L."/>
            <person name="Woodfine K."/>
            <person name="Spencer C.C.A."/>
            <person name="Jones M.C."/>
            <person name="Gillson C."/>
            <person name="Searle S."/>
            <person name="Zhou Y."/>
            <person name="Kokocinski F."/>
            <person name="McDonald L."/>
            <person name="Evans R."/>
            <person name="Phillips K."/>
            <person name="Atkinson A."/>
            <person name="Cooper R."/>
            <person name="Jones C."/>
            <person name="Hall R.E."/>
            <person name="Andrews T.D."/>
            <person name="Lloyd C."/>
            <person name="Ainscough R."/>
            <person name="Almeida J.P."/>
            <person name="Ambrose K.D."/>
            <person name="Anderson F."/>
            <person name="Andrew R.W."/>
            <person name="Ashwell R.I.S."/>
            <person name="Aubin K."/>
            <person name="Babbage A.K."/>
            <person name="Bagguley C.L."/>
            <person name="Bailey J."/>
            <person name="Beasley H."/>
            <person name="Bethel G."/>
            <person name="Bird C.P."/>
            <person name="Bray-Allen S."/>
            <person name="Brown J.Y."/>
            <person name="Brown A.J."/>
            <person name="Buckley D."/>
            <person name="Burton J."/>
            <person name="Bye J."/>
            <person name="Carder C."/>
            <person name="Chapman J.C."/>
            <person name="Clark S.Y."/>
            <person name="Clarke G."/>
            <person name="Clee C."/>
            <person name="Cobley V."/>
            <person name="Collier R.E."/>
            <person name="Corby N."/>
            <person name="Coville G.J."/>
            <person name="Davies J."/>
            <person name="Deadman R."/>
            <person name="Dunn M."/>
            <person name="Earthrowl M."/>
            <person name="Ellington A.G."/>
            <person name="Errington H."/>
            <person name="Frankish A."/>
            <person name="Frankland J."/>
            <person name="French L."/>
            <person name="Garner P."/>
            <person name="Garnett J."/>
            <person name="Gay L."/>
            <person name="Ghori M.R.J."/>
            <person name="Gibson R."/>
            <person name="Gilby L.M."/>
            <person name="Gillett W."/>
            <person name="Glithero R.J."/>
            <person name="Grafham D.V."/>
            <person name="Griffiths C."/>
            <person name="Griffiths-Jones S."/>
            <person name="Grocock R."/>
            <person name="Hammond S."/>
            <person name="Harrison E.S.I."/>
            <person name="Hart E."/>
            <person name="Haugen E."/>
            <person name="Heath P.D."/>
            <person name="Holmes S."/>
            <person name="Holt K."/>
            <person name="Howden P.J."/>
            <person name="Hunt A.R."/>
            <person name="Hunt S.E."/>
            <person name="Hunter G."/>
            <person name="Isherwood J."/>
            <person name="James R."/>
            <person name="Johnson C."/>
            <person name="Johnson D."/>
            <person name="Joy A."/>
            <person name="Kay M."/>
            <person name="Kershaw J.K."/>
            <person name="Kibukawa M."/>
            <person name="Kimberley A.M."/>
            <person name="King A."/>
            <person name="Knights A.J."/>
            <person name="Lad H."/>
            <person name="Laird G."/>
            <person name="Lawlor S."/>
            <person name="Leongamornlert D.A."/>
            <person name="Lloyd D.M."/>
            <person name="Loveland J."/>
            <person name="Lovell J."/>
            <person name="Lush M.J."/>
            <person name="Lyne R."/>
            <person name="Martin S."/>
            <person name="Mashreghi-Mohammadi M."/>
            <person name="Matthews L."/>
            <person name="Matthews N.S.W."/>
            <person name="McLaren S."/>
            <person name="Milne S."/>
            <person name="Mistry S."/>
            <person name="Moore M.J.F."/>
            <person name="Nickerson T."/>
            <person name="O'Dell C.N."/>
            <person name="Oliver K."/>
            <person name="Palmeiri A."/>
            <person name="Palmer S.A."/>
            <person name="Parker A."/>
            <person name="Patel D."/>
            <person name="Pearce A.V."/>
            <person name="Peck A.I."/>
            <person name="Pelan S."/>
            <person name="Phelps K."/>
            <person name="Phillimore B.J."/>
            <person name="Plumb R."/>
            <person name="Rajan J."/>
            <person name="Raymond C."/>
            <person name="Rouse G."/>
            <person name="Saenphimmachak C."/>
            <person name="Sehra H.K."/>
            <person name="Sheridan E."/>
            <person name="Shownkeen R."/>
            <person name="Sims S."/>
            <person name="Skuce C.D."/>
            <person name="Smith M."/>
            <person name="Steward C."/>
            <person name="Subramanian S."/>
            <person name="Sycamore N."/>
            <person name="Tracey A."/>
            <person name="Tromans A."/>
            <person name="Van Helmond Z."/>
            <person name="Wall M."/>
            <person name="Wallis J.M."/>
            <person name="White S."/>
            <person name="Whitehead S.L."/>
            <person name="Wilkinson J.E."/>
            <person name="Willey D.L."/>
            <person name="Williams H."/>
            <person name="Wilming L."/>
            <person name="Wray P.W."/>
            <person name="Wu Z."/>
            <person name="Coulson A."/>
            <person name="Vaudin M."/>
            <person name="Sulston J.E."/>
            <person name="Durbin R.M."/>
            <person name="Hubbard T."/>
            <person name="Wooster R."/>
            <person name="Dunham I."/>
            <person name="Carter N.P."/>
            <person name="McVean G."/>
            <person name="Ross M.T."/>
            <person name="Harrow J."/>
            <person name="Olson M.V."/>
            <person name="Beck S."/>
            <person name="Rogers J."/>
            <person name="Bentley D.R."/>
        </authorList>
    </citation>
    <scope>NUCLEOTIDE SEQUENCE [LARGE SCALE GENOMIC DNA]</scope>
</reference>
<reference key="3">
    <citation type="journal article" date="2004" name="Genome Res.">
        <title>The status, quality, and expansion of the NIH full-length cDNA project: the Mammalian Gene Collection (MGC).</title>
        <authorList>
            <consortium name="The MGC Project Team"/>
        </authorList>
    </citation>
    <scope>NUCLEOTIDE SEQUENCE [LARGE SCALE MRNA]</scope>
    <source>
        <tissue>Pancreas</tissue>
    </source>
</reference>
<reference key="4">
    <citation type="journal article" date="2011" name="BMC Syst. Biol.">
        <title>Initial characterization of the human central proteome.</title>
        <authorList>
            <person name="Burkard T.R."/>
            <person name="Planyavsky M."/>
            <person name="Kaupe I."/>
            <person name="Breitwieser F.P."/>
            <person name="Buerckstuemmer T."/>
            <person name="Bennett K.L."/>
            <person name="Superti-Furga G."/>
            <person name="Colinge J."/>
        </authorList>
    </citation>
    <scope>IDENTIFICATION BY MASS SPECTROMETRY [LARGE SCALE ANALYSIS]</scope>
</reference>
<reference key="5">
    <citation type="journal article" date="2011" name="PLoS ONE">
        <title>S100A14 stimulates cell proliferation and induces cell apoptosis at different concentrations via receptor for advanced glycation end products (RAGE).</title>
        <authorList>
            <person name="Jin Q."/>
            <person name="Chen H."/>
            <person name="Luo A."/>
            <person name="Ding F."/>
            <person name="Liu Z."/>
        </authorList>
    </citation>
    <scope>FUNCTION</scope>
    <scope>INTERACTION WITH AGER</scope>
</reference>
<reference key="6">
    <citation type="journal article" date="2012" name="J. Biol. Chem.">
        <title>Involvement of S100A14 protein in cell invasion by affecting expression and function of matrix metalloproteinase (MMP)-2 via p53-dependent transcriptional regulation.</title>
        <authorList>
            <person name="Chen H."/>
            <person name="Yuan Y."/>
            <person name="Zhang C."/>
            <person name="Luo A."/>
            <person name="Ding F."/>
            <person name="Ma J."/>
            <person name="Yang S."/>
            <person name="Tian Y."/>
            <person name="Tong T."/>
            <person name="Zhan Q."/>
            <person name="Liu Z."/>
        </authorList>
    </citation>
    <scope>FUNCTION</scope>
</reference>
<reference key="7">
    <citation type="journal article" date="2012" name="Oral Oncol.">
        <title>S100A14 inhibits proliferation of oral carcinoma derived cells through G1-arrest.</title>
        <authorList>
            <person name="Sapkota D."/>
            <person name="Costea D.E."/>
            <person name="Blo M."/>
            <person name="Bruland O."/>
            <person name="Lorens J.B."/>
            <person name="Vasstrand E.N."/>
            <person name="Ibrahim S.O."/>
        </authorList>
    </citation>
    <scope>FUNCTION</scope>
</reference>
<reference key="8">
    <citation type="journal article" date="2013" name="J. Biol. Inorg. Chem.">
        <title>Solution structure and dynamics of human S100A14.</title>
        <authorList>
            <person name="Bertini I."/>
            <person name="Borsi V."/>
            <person name="Cerofolini L."/>
            <person name="Das Gupta S."/>
            <person name="Fragai M."/>
            <person name="Luchinat C."/>
        </authorList>
    </citation>
    <scope>STRUCTURE BY NMR</scope>
    <scope>ABSENCE OF CALCIUM-BINDING</scope>
    <scope>SUBUNIT</scope>
</reference>
<accession>Q9HCY8</accession>
<accession>Q5RHT0</accession>
<feature type="chain" id="PRO_0000144021" description="Protein S100-A14">
    <location>
        <begin position="1"/>
        <end position="104"/>
    </location>
</feature>
<feature type="domain" description="EF-hand">
    <location>
        <begin position="27"/>
        <end position="61"/>
    </location>
</feature>
<feature type="strand" evidence="8">
    <location>
        <begin position="8"/>
        <end position="11"/>
    </location>
</feature>
<feature type="helix" evidence="8">
    <location>
        <begin position="19"/>
        <end position="32"/>
    </location>
</feature>
<feature type="turn" evidence="8">
    <location>
        <begin position="34"/>
        <end position="39"/>
    </location>
</feature>
<feature type="helix" evidence="8">
    <location>
        <begin position="43"/>
        <end position="53"/>
    </location>
</feature>
<feature type="turn" evidence="8">
    <location>
        <begin position="55"/>
        <end position="57"/>
    </location>
</feature>
<feature type="helix" evidence="8">
    <location>
        <begin position="60"/>
        <end position="62"/>
    </location>
</feature>
<feature type="helix" evidence="8">
    <location>
        <begin position="65"/>
        <end position="71"/>
    </location>
</feature>
<feature type="helix" evidence="8">
    <location>
        <begin position="81"/>
        <end position="94"/>
    </location>
</feature>
<feature type="strand" evidence="8">
    <location>
        <begin position="98"/>
        <end position="100"/>
    </location>
</feature>